<reference key="1">
    <citation type="journal article" date="2007" name="Appl. Environ. Microbiol.">
        <title>Genome sequence of the cellulolytic gliding bacterium Cytophaga hutchinsonii.</title>
        <authorList>
            <person name="Xie G."/>
            <person name="Bruce D.C."/>
            <person name="Challacombe J.F."/>
            <person name="Chertkov O."/>
            <person name="Detter J.C."/>
            <person name="Gilna P."/>
            <person name="Han C.S."/>
            <person name="Lucas S."/>
            <person name="Misra M."/>
            <person name="Myers G.L."/>
            <person name="Richardson P."/>
            <person name="Tapia R."/>
            <person name="Thayer N."/>
            <person name="Thompson L.S."/>
            <person name="Brettin T.S."/>
            <person name="Henrissat B."/>
            <person name="Wilson D.B."/>
            <person name="McBride M.J."/>
        </authorList>
    </citation>
    <scope>NUCLEOTIDE SEQUENCE [LARGE SCALE GENOMIC DNA]</scope>
    <source>
        <strain>ATCC 33406 / DSM 1761 / JCM 20678 / CIP 103989 / IAM 12607 / NBRC 15051 / NCIMB 9469 / D465</strain>
    </source>
</reference>
<organism>
    <name type="scientific">Cytophaga hutchinsonii (strain ATCC 33406 / DSM 1761 / CIP 103989 / NBRC 15051 / NCIMB 9469 / D465)</name>
    <dbReference type="NCBI Taxonomy" id="269798"/>
    <lineage>
        <taxon>Bacteria</taxon>
        <taxon>Pseudomonadati</taxon>
        <taxon>Bacteroidota</taxon>
        <taxon>Cytophagia</taxon>
        <taxon>Cytophagales</taxon>
        <taxon>Cytophagaceae</taxon>
        <taxon>Cytophaga</taxon>
    </lineage>
</organism>
<feature type="chain" id="PRO_0000313210" description="DNA ligase">
    <location>
        <begin position="1"/>
        <end position="670"/>
    </location>
</feature>
<feature type="domain" description="BRCT" evidence="1">
    <location>
        <begin position="591"/>
        <end position="670"/>
    </location>
</feature>
<feature type="active site" description="N6-AMP-lysine intermediate" evidence="1">
    <location>
        <position position="115"/>
    </location>
</feature>
<feature type="binding site" evidence="1">
    <location>
        <begin position="34"/>
        <end position="38"/>
    </location>
    <ligand>
        <name>NAD(+)</name>
        <dbReference type="ChEBI" id="CHEBI:57540"/>
    </ligand>
</feature>
<feature type="binding site" evidence="1">
    <location>
        <begin position="83"/>
        <end position="84"/>
    </location>
    <ligand>
        <name>NAD(+)</name>
        <dbReference type="ChEBI" id="CHEBI:57540"/>
    </ligand>
</feature>
<feature type="binding site" evidence="1">
    <location>
        <position position="113"/>
    </location>
    <ligand>
        <name>NAD(+)</name>
        <dbReference type="ChEBI" id="CHEBI:57540"/>
    </ligand>
</feature>
<feature type="binding site" evidence="1">
    <location>
        <position position="136"/>
    </location>
    <ligand>
        <name>NAD(+)</name>
        <dbReference type="ChEBI" id="CHEBI:57540"/>
    </ligand>
</feature>
<feature type="binding site" evidence="1">
    <location>
        <position position="173"/>
    </location>
    <ligand>
        <name>NAD(+)</name>
        <dbReference type="ChEBI" id="CHEBI:57540"/>
    </ligand>
</feature>
<feature type="binding site" evidence="1">
    <location>
        <position position="288"/>
    </location>
    <ligand>
        <name>NAD(+)</name>
        <dbReference type="ChEBI" id="CHEBI:57540"/>
    </ligand>
</feature>
<feature type="binding site" evidence="1">
    <location>
        <position position="312"/>
    </location>
    <ligand>
        <name>NAD(+)</name>
        <dbReference type="ChEBI" id="CHEBI:57540"/>
    </ligand>
</feature>
<feature type="binding site" evidence="1">
    <location>
        <position position="406"/>
    </location>
    <ligand>
        <name>Zn(2+)</name>
        <dbReference type="ChEBI" id="CHEBI:29105"/>
    </ligand>
</feature>
<feature type="binding site" evidence="1">
    <location>
        <position position="409"/>
    </location>
    <ligand>
        <name>Zn(2+)</name>
        <dbReference type="ChEBI" id="CHEBI:29105"/>
    </ligand>
</feature>
<feature type="binding site" evidence="1">
    <location>
        <position position="424"/>
    </location>
    <ligand>
        <name>Zn(2+)</name>
        <dbReference type="ChEBI" id="CHEBI:29105"/>
    </ligand>
</feature>
<feature type="binding site" evidence="1">
    <location>
        <position position="430"/>
    </location>
    <ligand>
        <name>Zn(2+)</name>
        <dbReference type="ChEBI" id="CHEBI:29105"/>
    </ligand>
</feature>
<accession>Q11VI1</accession>
<evidence type="ECO:0000255" key="1">
    <source>
        <dbReference type="HAMAP-Rule" id="MF_01588"/>
    </source>
</evidence>
<proteinExistence type="inferred from homology"/>
<name>DNLJ_CYTH3</name>
<comment type="function">
    <text evidence="1">DNA ligase that catalyzes the formation of phosphodiester linkages between 5'-phosphoryl and 3'-hydroxyl groups in double-stranded DNA using NAD as a coenzyme and as the energy source for the reaction. It is essential for DNA replication and repair of damaged DNA.</text>
</comment>
<comment type="catalytic activity">
    <reaction evidence="1">
        <text>NAD(+) + (deoxyribonucleotide)n-3'-hydroxyl + 5'-phospho-(deoxyribonucleotide)m = (deoxyribonucleotide)n+m + AMP + beta-nicotinamide D-nucleotide.</text>
        <dbReference type="EC" id="6.5.1.2"/>
    </reaction>
</comment>
<comment type="cofactor">
    <cofactor evidence="1">
        <name>Mg(2+)</name>
        <dbReference type="ChEBI" id="CHEBI:18420"/>
    </cofactor>
    <cofactor evidence="1">
        <name>Mn(2+)</name>
        <dbReference type="ChEBI" id="CHEBI:29035"/>
    </cofactor>
</comment>
<comment type="similarity">
    <text evidence="1">Belongs to the NAD-dependent DNA ligase family. LigA subfamily.</text>
</comment>
<sequence>MNDAQALARIEELNKVLHYHNNLYYQKDTTEISDFEFDTLLQELIELEKQFPLYLKADSPSQRVGGTVTKEFASISHKYPMLSLSNTYSEEEIREFDERVQKAVGHAVEYVCEMKFDGVAISITYKNGMIAQAVTRGDGVRGDDVTNNIKTIKSIPLKIQSATFPEEFEVRGEVYLPYEMFERINQEREDIGEAALANPRNAASGTVKMQDSGIVAKRALDCFIYSLLQDSNKQPTHAAALAQLKEWGFRVSDSYKVCKNVDEIIQYINHWSEERFKLPLATDGIVIKVNDLRLQSELGMTAKSPRWAIAYKFKAEEASTPILSVEYQVGRTGAVTPVANLAPVHLAGTTVKRATLHNANEMERLNLHIGDTVFVEKGGEIIPKITRVDVSKRIAGSQMIPFIQNCPVCDTKLIRIEGEAAWYCPNDKGCAPQITGKIEHFIQRKAMNIDGIGSETIELLYQKKLIRNVADLYTLTYDQLIQLDRFGEKSVTNVLNGIEASKQTPFKSVLFAIGIRYVGSTVAEKLALHFKSINALEKASIEELLQAPEIGIKIAQSIIEWFSVDTNVQLIEDLKKAGVKLELSEHEILKPESDKFAGKSFVISGVFENYERDELKDLILKNGGKISSGITGKLNYLVAGENMGPAKLEKAQKLNITILSEAEFISLLNS</sequence>
<protein>
    <recommendedName>
        <fullName evidence="1">DNA ligase</fullName>
        <ecNumber evidence="1">6.5.1.2</ecNumber>
    </recommendedName>
    <alternativeName>
        <fullName evidence="1">Polydeoxyribonucleotide synthase [NAD(+)]</fullName>
    </alternativeName>
</protein>
<dbReference type="EC" id="6.5.1.2" evidence="1"/>
<dbReference type="EMBL" id="CP000383">
    <property type="protein sequence ID" value="ABG58585.1"/>
    <property type="molecule type" value="Genomic_DNA"/>
</dbReference>
<dbReference type="RefSeq" id="WP_011584700.1">
    <property type="nucleotide sequence ID" value="NC_008255.1"/>
</dbReference>
<dbReference type="SMR" id="Q11VI1"/>
<dbReference type="STRING" id="269798.CHU_1313"/>
<dbReference type="KEGG" id="chu:CHU_1313"/>
<dbReference type="eggNOG" id="COG0272">
    <property type="taxonomic scope" value="Bacteria"/>
</dbReference>
<dbReference type="HOGENOM" id="CLU_007764_2_1_10"/>
<dbReference type="OrthoDB" id="9759736at2"/>
<dbReference type="Proteomes" id="UP000001822">
    <property type="component" value="Chromosome"/>
</dbReference>
<dbReference type="GO" id="GO:0005829">
    <property type="term" value="C:cytosol"/>
    <property type="evidence" value="ECO:0007669"/>
    <property type="project" value="TreeGrafter"/>
</dbReference>
<dbReference type="GO" id="GO:0003677">
    <property type="term" value="F:DNA binding"/>
    <property type="evidence" value="ECO:0007669"/>
    <property type="project" value="InterPro"/>
</dbReference>
<dbReference type="GO" id="GO:0003911">
    <property type="term" value="F:DNA ligase (NAD+) activity"/>
    <property type="evidence" value="ECO:0007669"/>
    <property type="project" value="UniProtKB-UniRule"/>
</dbReference>
<dbReference type="GO" id="GO:0046872">
    <property type="term" value="F:metal ion binding"/>
    <property type="evidence" value="ECO:0007669"/>
    <property type="project" value="UniProtKB-KW"/>
</dbReference>
<dbReference type="GO" id="GO:0006281">
    <property type="term" value="P:DNA repair"/>
    <property type="evidence" value="ECO:0007669"/>
    <property type="project" value="UniProtKB-KW"/>
</dbReference>
<dbReference type="GO" id="GO:0006260">
    <property type="term" value="P:DNA replication"/>
    <property type="evidence" value="ECO:0007669"/>
    <property type="project" value="UniProtKB-KW"/>
</dbReference>
<dbReference type="CDD" id="cd17748">
    <property type="entry name" value="BRCT_DNA_ligase_like"/>
    <property type="match status" value="1"/>
</dbReference>
<dbReference type="CDD" id="cd00114">
    <property type="entry name" value="LIGANc"/>
    <property type="match status" value="1"/>
</dbReference>
<dbReference type="FunFam" id="1.10.150.20:FF:000006">
    <property type="entry name" value="DNA ligase"/>
    <property type="match status" value="1"/>
</dbReference>
<dbReference type="FunFam" id="1.10.150.20:FF:000007">
    <property type="entry name" value="DNA ligase"/>
    <property type="match status" value="1"/>
</dbReference>
<dbReference type="FunFam" id="2.40.50.140:FF:000012">
    <property type="entry name" value="DNA ligase"/>
    <property type="match status" value="1"/>
</dbReference>
<dbReference type="FunFam" id="3.30.470.30:FF:000001">
    <property type="entry name" value="DNA ligase"/>
    <property type="match status" value="1"/>
</dbReference>
<dbReference type="Gene3D" id="6.20.10.30">
    <property type="match status" value="1"/>
</dbReference>
<dbReference type="Gene3D" id="1.10.150.20">
    <property type="entry name" value="5' to 3' exonuclease, C-terminal subdomain"/>
    <property type="match status" value="2"/>
</dbReference>
<dbReference type="Gene3D" id="3.40.50.10190">
    <property type="entry name" value="BRCT domain"/>
    <property type="match status" value="1"/>
</dbReference>
<dbReference type="Gene3D" id="3.30.470.30">
    <property type="entry name" value="DNA ligase/mRNA capping enzyme"/>
    <property type="match status" value="1"/>
</dbReference>
<dbReference type="Gene3D" id="1.10.287.610">
    <property type="entry name" value="Helix hairpin bin"/>
    <property type="match status" value="1"/>
</dbReference>
<dbReference type="Gene3D" id="2.40.50.140">
    <property type="entry name" value="Nucleic acid-binding proteins"/>
    <property type="match status" value="1"/>
</dbReference>
<dbReference type="HAMAP" id="MF_01588">
    <property type="entry name" value="DNA_ligase_A"/>
    <property type="match status" value="1"/>
</dbReference>
<dbReference type="InterPro" id="IPR001357">
    <property type="entry name" value="BRCT_dom"/>
</dbReference>
<dbReference type="InterPro" id="IPR036420">
    <property type="entry name" value="BRCT_dom_sf"/>
</dbReference>
<dbReference type="InterPro" id="IPR041663">
    <property type="entry name" value="DisA/LigA_HHH"/>
</dbReference>
<dbReference type="InterPro" id="IPR001679">
    <property type="entry name" value="DNA_ligase"/>
</dbReference>
<dbReference type="InterPro" id="IPR033136">
    <property type="entry name" value="DNA_ligase_CS"/>
</dbReference>
<dbReference type="InterPro" id="IPR013839">
    <property type="entry name" value="DNAligase_adenylation"/>
</dbReference>
<dbReference type="InterPro" id="IPR013840">
    <property type="entry name" value="DNAligase_N"/>
</dbReference>
<dbReference type="InterPro" id="IPR003583">
    <property type="entry name" value="Hlx-hairpin-Hlx_DNA-bd_motif"/>
</dbReference>
<dbReference type="InterPro" id="IPR012340">
    <property type="entry name" value="NA-bd_OB-fold"/>
</dbReference>
<dbReference type="InterPro" id="IPR004150">
    <property type="entry name" value="NAD_DNA_ligase_OB"/>
</dbReference>
<dbReference type="InterPro" id="IPR010994">
    <property type="entry name" value="RuvA_2-like"/>
</dbReference>
<dbReference type="InterPro" id="IPR004149">
    <property type="entry name" value="Znf_DNAligase_C4"/>
</dbReference>
<dbReference type="NCBIfam" id="TIGR00575">
    <property type="entry name" value="dnlj"/>
    <property type="match status" value="1"/>
</dbReference>
<dbReference type="NCBIfam" id="NF005932">
    <property type="entry name" value="PRK07956.1"/>
    <property type="match status" value="1"/>
</dbReference>
<dbReference type="PANTHER" id="PTHR23389">
    <property type="entry name" value="CHROMOSOME TRANSMISSION FIDELITY FACTOR 18"/>
    <property type="match status" value="1"/>
</dbReference>
<dbReference type="PANTHER" id="PTHR23389:SF9">
    <property type="entry name" value="DNA LIGASE"/>
    <property type="match status" value="1"/>
</dbReference>
<dbReference type="Pfam" id="PF00533">
    <property type="entry name" value="BRCT"/>
    <property type="match status" value="1"/>
</dbReference>
<dbReference type="Pfam" id="PF01653">
    <property type="entry name" value="DNA_ligase_aden"/>
    <property type="match status" value="1"/>
</dbReference>
<dbReference type="Pfam" id="PF03120">
    <property type="entry name" value="DNA_ligase_OB"/>
    <property type="match status" value="1"/>
</dbReference>
<dbReference type="Pfam" id="PF03119">
    <property type="entry name" value="DNA_ligase_ZBD"/>
    <property type="match status" value="1"/>
</dbReference>
<dbReference type="Pfam" id="PF12826">
    <property type="entry name" value="HHH_2"/>
    <property type="match status" value="1"/>
</dbReference>
<dbReference type="Pfam" id="PF14520">
    <property type="entry name" value="HHH_5"/>
    <property type="match status" value="1"/>
</dbReference>
<dbReference type="Pfam" id="PF22745">
    <property type="entry name" value="Nlig-Ia"/>
    <property type="match status" value="1"/>
</dbReference>
<dbReference type="PIRSF" id="PIRSF001604">
    <property type="entry name" value="LigA"/>
    <property type="match status" value="1"/>
</dbReference>
<dbReference type="SMART" id="SM00292">
    <property type="entry name" value="BRCT"/>
    <property type="match status" value="1"/>
</dbReference>
<dbReference type="SMART" id="SM00278">
    <property type="entry name" value="HhH1"/>
    <property type="match status" value="4"/>
</dbReference>
<dbReference type="SMART" id="SM00532">
    <property type="entry name" value="LIGANc"/>
    <property type="match status" value="1"/>
</dbReference>
<dbReference type="SUPFAM" id="SSF52113">
    <property type="entry name" value="BRCT domain"/>
    <property type="match status" value="1"/>
</dbReference>
<dbReference type="SUPFAM" id="SSF56091">
    <property type="entry name" value="DNA ligase/mRNA capping enzyme, catalytic domain"/>
    <property type="match status" value="1"/>
</dbReference>
<dbReference type="SUPFAM" id="SSF50249">
    <property type="entry name" value="Nucleic acid-binding proteins"/>
    <property type="match status" value="1"/>
</dbReference>
<dbReference type="SUPFAM" id="SSF47781">
    <property type="entry name" value="RuvA domain 2-like"/>
    <property type="match status" value="1"/>
</dbReference>
<dbReference type="PROSITE" id="PS50172">
    <property type="entry name" value="BRCT"/>
    <property type="match status" value="1"/>
</dbReference>
<dbReference type="PROSITE" id="PS01056">
    <property type="entry name" value="DNA_LIGASE_N2"/>
    <property type="match status" value="1"/>
</dbReference>
<keyword id="KW-0227">DNA damage</keyword>
<keyword id="KW-0234">DNA repair</keyword>
<keyword id="KW-0235">DNA replication</keyword>
<keyword id="KW-0436">Ligase</keyword>
<keyword id="KW-0460">Magnesium</keyword>
<keyword id="KW-0464">Manganese</keyword>
<keyword id="KW-0479">Metal-binding</keyword>
<keyword id="KW-0520">NAD</keyword>
<keyword id="KW-1185">Reference proteome</keyword>
<keyword id="KW-0862">Zinc</keyword>
<gene>
    <name evidence="1" type="primary">ligA</name>
    <name type="ordered locus">CHU_1313</name>
</gene>